<accession>C0Q4D9</accession>
<gene>
    <name evidence="1" type="primary">ubiA</name>
    <name type="ordered locus">SPC_4295</name>
</gene>
<organism>
    <name type="scientific">Salmonella paratyphi C (strain RKS4594)</name>
    <dbReference type="NCBI Taxonomy" id="476213"/>
    <lineage>
        <taxon>Bacteria</taxon>
        <taxon>Pseudomonadati</taxon>
        <taxon>Pseudomonadota</taxon>
        <taxon>Gammaproteobacteria</taxon>
        <taxon>Enterobacterales</taxon>
        <taxon>Enterobacteriaceae</taxon>
        <taxon>Salmonella</taxon>
    </lineage>
</organism>
<reference key="1">
    <citation type="journal article" date="2009" name="PLoS ONE">
        <title>Salmonella paratyphi C: genetic divergence from Salmonella choleraesuis and pathogenic convergence with Salmonella typhi.</title>
        <authorList>
            <person name="Liu W.-Q."/>
            <person name="Feng Y."/>
            <person name="Wang Y."/>
            <person name="Zou Q.-H."/>
            <person name="Chen F."/>
            <person name="Guo J.-T."/>
            <person name="Peng Y.-H."/>
            <person name="Jin Y."/>
            <person name="Li Y.-G."/>
            <person name="Hu S.-N."/>
            <person name="Johnston R.N."/>
            <person name="Liu G.-R."/>
            <person name="Liu S.-L."/>
        </authorList>
    </citation>
    <scope>NUCLEOTIDE SEQUENCE [LARGE SCALE GENOMIC DNA]</scope>
    <source>
        <strain>RKS4594</strain>
    </source>
</reference>
<evidence type="ECO:0000255" key="1">
    <source>
        <dbReference type="HAMAP-Rule" id="MF_01635"/>
    </source>
</evidence>
<comment type="function">
    <text evidence="1">Catalyzes the prenylation of para-hydroxybenzoate (PHB) with an all-trans polyprenyl group. Mediates the second step in the final reaction sequence of ubiquinone-8 (UQ-8) biosynthesis, which is the condensation of the polyisoprenoid side chain with PHB, generating the first membrane-bound Q intermediate 3-octaprenyl-4-hydroxybenzoate.</text>
</comment>
<comment type="catalytic activity">
    <reaction evidence="1">
        <text>all-trans-octaprenyl diphosphate + 4-hydroxybenzoate = 4-hydroxy-3-(all-trans-octaprenyl)benzoate + diphosphate</text>
        <dbReference type="Rhea" id="RHEA:27782"/>
        <dbReference type="ChEBI" id="CHEBI:1617"/>
        <dbReference type="ChEBI" id="CHEBI:17879"/>
        <dbReference type="ChEBI" id="CHEBI:33019"/>
        <dbReference type="ChEBI" id="CHEBI:57711"/>
        <dbReference type="EC" id="2.5.1.39"/>
    </reaction>
</comment>
<comment type="cofactor">
    <cofactor evidence="1">
        <name>Mg(2+)</name>
        <dbReference type="ChEBI" id="CHEBI:18420"/>
    </cofactor>
</comment>
<comment type="pathway">
    <text evidence="1">Cofactor biosynthesis; ubiquinone biosynthesis.</text>
</comment>
<comment type="subcellular location">
    <subcellularLocation>
        <location evidence="1">Cell inner membrane</location>
        <topology evidence="1">Multi-pass membrane protein</topology>
    </subcellularLocation>
</comment>
<comment type="similarity">
    <text evidence="1">Belongs to the UbiA prenyltransferase family.</text>
</comment>
<dbReference type="EC" id="2.5.1.39" evidence="1"/>
<dbReference type="EMBL" id="CP000857">
    <property type="protein sequence ID" value="ACN48358.1"/>
    <property type="molecule type" value="Genomic_DNA"/>
</dbReference>
<dbReference type="RefSeq" id="WP_000455248.1">
    <property type="nucleotide sequence ID" value="NC_012125.1"/>
</dbReference>
<dbReference type="SMR" id="C0Q4D9"/>
<dbReference type="KEGG" id="sei:SPC_4295"/>
<dbReference type="HOGENOM" id="CLU_034879_1_0_6"/>
<dbReference type="UniPathway" id="UPA00232"/>
<dbReference type="Proteomes" id="UP000001599">
    <property type="component" value="Chromosome"/>
</dbReference>
<dbReference type="GO" id="GO:0005886">
    <property type="term" value="C:plasma membrane"/>
    <property type="evidence" value="ECO:0007669"/>
    <property type="project" value="UniProtKB-SubCell"/>
</dbReference>
<dbReference type="GO" id="GO:0008412">
    <property type="term" value="F:4-hydroxybenzoate polyprenyltransferase activity"/>
    <property type="evidence" value="ECO:0007669"/>
    <property type="project" value="UniProtKB-UniRule"/>
</dbReference>
<dbReference type="GO" id="GO:0006744">
    <property type="term" value="P:ubiquinone biosynthetic process"/>
    <property type="evidence" value="ECO:0007669"/>
    <property type="project" value="UniProtKB-UniRule"/>
</dbReference>
<dbReference type="CDD" id="cd13959">
    <property type="entry name" value="PT_UbiA_COQ2"/>
    <property type="match status" value="1"/>
</dbReference>
<dbReference type="FunFam" id="1.10.357.140:FF:000002">
    <property type="entry name" value="4-hydroxybenzoate octaprenyltransferase"/>
    <property type="match status" value="1"/>
</dbReference>
<dbReference type="FunFam" id="1.20.120.1780:FF:000001">
    <property type="entry name" value="4-hydroxybenzoate octaprenyltransferase"/>
    <property type="match status" value="1"/>
</dbReference>
<dbReference type="Gene3D" id="1.10.357.140">
    <property type="entry name" value="UbiA prenyltransferase"/>
    <property type="match status" value="1"/>
</dbReference>
<dbReference type="Gene3D" id="1.20.120.1780">
    <property type="entry name" value="UbiA prenyltransferase"/>
    <property type="match status" value="1"/>
</dbReference>
<dbReference type="HAMAP" id="MF_01635">
    <property type="entry name" value="UbiA"/>
    <property type="match status" value="1"/>
</dbReference>
<dbReference type="InterPro" id="IPR006370">
    <property type="entry name" value="HB_polyprenyltransferase-like"/>
</dbReference>
<dbReference type="InterPro" id="IPR039653">
    <property type="entry name" value="Prenyltransferase"/>
</dbReference>
<dbReference type="InterPro" id="IPR000537">
    <property type="entry name" value="UbiA_prenyltransferase"/>
</dbReference>
<dbReference type="InterPro" id="IPR030470">
    <property type="entry name" value="UbiA_prenylTrfase_CS"/>
</dbReference>
<dbReference type="InterPro" id="IPR044878">
    <property type="entry name" value="UbiA_sf"/>
</dbReference>
<dbReference type="NCBIfam" id="TIGR01474">
    <property type="entry name" value="ubiA_proteo"/>
    <property type="match status" value="1"/>
</dbReference>
<dbReference type="PANTHER" id="PTHR11048:SF28">
    <property type="entry name" value="4-HYDROXYBENZOATE POLYPRENYLTRANSFERASE, MITOCHONDRIAL"/>
    <property type="match status" value="1"/>
</dbReference>
<dbReference type="PANTHER" id="PTHR11048">
    <property type="entry name" value="PRENYLTRANSFERASES"/>
    <property type="match status" value="1"/>
</dbReference>
<dbReference type="Pfam" id="PF01040">
    <property type="entry name" value="UbiA"/>
    <property type="match status" value="1"/>
</dbReference>
<dbReference type="PROSITE" id="PS00943">
    <property type="entry name" value="UBIA"/>
    <property type="match status" value="1"/>
</dbReference>
<name>UBIA_SALPC</name>
<proteinExistence type="inferred from homology"/>
<protein>
    <recommendedName>
        <fullName evidence="1">4-hydroxybenzoate octaprenyltransferase</fullName>
        <ecNumber evidence="1">2.5.1.39</ecNumber>
    </recommendedName>
    <alternativeName>
        <fullName evidence="1">4-HB polyprenyltransferase</fullName>
    </alternativeName>
</protein>
<sequence length="290" mass="32473">MEWSLTQSKLLAFHRLMRTDKPIGALLLLWPTLWALWVATPGMPQLWILAVFVAGVWLMRAAGCVVNDYADRKFDGHVKRTVNRPLPSGAVTEKEARNLFVVLVLLAFLLVLTLNAMTILLSVAALALAWVYPFMKRYTHLPQVVLGAAFGWSIPMAFAAVSESLPLSCWLMFLANILWAVAYDTQYAMVDRDDDIKIGIKSTAILFGRYDTLIIGILQLGVMALMALIGWLNGLGGGYYWAVLVAGALFVYQQKLIANREREACFKAFMNNNYVGLVLFLGLAMSYWHF</sequence>
<feature type="chain" id="PRO_1000186687" description="4-hydroxybenzoate octaprenyltransferase">
    <location>
        <begin position="1"/>
        <end position="290"/>
    </location>
</feature>
<feature type="transmembrane region" description="Helical" evidence="1">
    <location>
        <begin position="23"/>
        <end position="43"/>
    </location>
</feature>
<feature type="transmembrane region" description="Helical" evidence="1">
    <location>
        <begin position="46"/>
        <end position="66"/>
    </location>
</feature>
<feature type="transmembrane region" description="Helical" evidence="1">
    <location>
        <begin position="99"/>
        <end position="119"/>
    </location>
</feature>
<feature type="transmembrane region" description="Helical" evidence="1">
    <location>
        <begin position="141"/>
        <end position="161"/>
    </location>
</feature>
<feature type="transmembrane region" description="Helical" evidence="1">
    <location>
        <begin position="163"/>
        <end position="183"/>
    </location>
</feature>
<feature type="transmembrane region" description="Helical" evidence="1">
    <location>
        <begin position="212"/>
        <end position="232"/>
    </location>
</feature>
<feature type="transmembrane region" description="Helical" evidence="1">
    <location>
        <begin position="233"/>
        <end position="253"/>
    </location>
</feature>
<feature type="transmembrane region" description="Helical" evidence="1">
    <location>
        <begin position="268"/>
        <end position="288"/>
    </location>
</feature>
<keyword id="KW-0997">Cell inner membrane</keyword>
<keyword id="KW-1003">Cell membrane</keyword>
<keyword id="KW-0460">Magnesium</keyword>
<keyword id="KW-0472">Membrane</keyword>
<keyword id="KW-0808">Transferase</keyword>
<keyword id="KW-0812">Transmembrane</keyword>
<keyword id="KW-1133">Transmembrane helix</keyword>
<keyword id="KW-0831">Ubiquinone biosynthesis</keyword>